<gene>
    <name evidence="9" type="primary">FUNDC2</name>
    <name type="synonym">HCBP6</name>
    <name type="ORF">DC44</name>
    <name type="ORF">HCC3</name>
    <name type="ORF">PD03104</name>
</gene>
<organism>
    <name type="scientific">Homo sapiens</name>
    <name type="common">Human</name>
    <dbReference type="NCBI Taxonomy" id="9606"/>
    <lineage>
        <taxon>Eukaryota</taxon>
        <taxon>Metazoa</taxon>
        <taxon>Chordata</taxon>
        <taxon>Craniata</taxon>
        <taxon>Vertebrata</taxon>
        <taxon>Euteleostomi</taxon>
        <taxon>Mammalia</taxon>
        <taxon>Eutheria</taxon>
        <taxon>Euarchontoglires</taxon>
        <taxon>Primates</taxon>
        <taxon>Haplorrhini</taxon>
        <taxon>Catarrhini</taxon>
        <taxon>Hominidae</taxon>
        <taxon>Homo</taxon>
    </lineage>
</organism>
<name>FUND2_HUMAN</name>
<protein>
    <recommendedName>
        <fullName evidence="6">FUN14 domain-containing protein 2</fullName>
    </recommendedName>
    <alternativeName>
        <fullName>Cervical cancer proto-oncogene 3 protein</fullName>
        <shortName>HCC-3</shortName>
    </alternativeName>
    <alternativeName>
        <fullName>Hepatitis C virus core-binding protein 6</fullName>
    </alternativeName>
</protein>
<feature type="chain" id="PRO_0000314615" description="FUN14 domain-containing protein 2">
    <location>
        <begin position="1"/>
        <end position="189"/>
    </location>
</feature>
<feature type="topological domain" description="Cytoplasmic" evidence="8">
    <location>
        <begin position="1"/>
        <end position="80"/>
    </location>
</feature>
<feature type="transmembrane region" description="Helical" evidence="1">
    <location>
        <begin position="81"/>
        <end position="101"/>
    </location>
</feature>
<feature type="topological domain" description="Mitochondrial intermembrane" evidence="8">
    <location>
        <begin position="102"/>
        <end position="107"/>
    </location>
</feature>
<feature type="transmembrane region" description="Helical" evidence="1">
    <location>
        <begin position="108"/>
        <end position="128"/>
    </location>
</feature>
<feature type="topological domain" description="Cytoplasmic" evidence="8">
    <location>
        <begin position="129"/>
        <end position="164"/>
    </location>
</feature>
<feature type="transmembrane region" description="Helical" evidence="1">
    <location>
        <begin position="165"/>
        <end position="185"/>
    </location>
</feature>
<feature type="topological domain" description="Mitochondrial intermembrane" evidence="8">
    <location>
        <begin position="186"/>
        <end position="189"/>
    </location>
</feature>
<feature type="modified residue" description="Phosphoserine" evidence="12">
    <location>
        <position position="10"/>
    </location>
</feature>
<feature type="modified residue" description="Phosphoserine" evidence="13">
    <location>
        <position position="53"/>
    </location>
</feature>
<feature type="modified residue" description="Phosphoserine" evidence="10 11 12 13">
    <location>
        <position position="151"/>
    </location>
</feature>
<proteinExistence type="evidence at protein level"/>
<comment type="function">
    <text evidence="2 3 4">Binds directly and specifically 1,2-Diacyl-sn-glycero-3-phospho-(1'-myo-inositol-3',4',5'-bisphosphate) (PIP3) leading to the recruitment of PIP3 to mitochondria and may play a role in the regulation of the platelet activation via AKT/GSK3B/cGMP signaling pathways (PubMed:29786068). May act as transcription factor that regulates SREBP1 (isoform SREBP-1C) expression in order to modulate triglyceride (TG) homeostasis in hepatocytes (PubMed:25855506, PubMed:29187281).</text>
</comment>
<comment type="interaction">
    <interactant intactId="EBI-714482">
        <id>Q9BWH2</id>
    </interactant>
    <interactant intactId="EBI-13059134">
        <id>Q13520</id>
        <label>AQP6</label>
    </interactant>
    <organismsDiffer>false</organismsDiffer>
    <experiments>3</experiments>
</comment>
<comment type="interaction">
    <interactant intactId="EBI-714482">
        <id>Q9BWH2</id>
    </interactant>
    <interactant intactId="EBI-11343438">
        <id>Q3SXY8</id>
        <label>ARL13B</label>
    </interactant>
    <organismsDiffer>false</organismsDiffer>
    <experiments>3</experiments>
</comment>
<comment type="interaction">
    <interactant intactId="EBI-714482">
        <id>Q9BWH2</id>
    </interactant>
    <interactant intactId="EBI-7797864">
        <id>P11912</id>
        <label>CD79A</label>
    </interactant>
    <organismsDiffer>false</organismsDiffer>
    <experiments>3</experiments>
</comment>
<comment type="interaction">
    <interactant intactId="EBI-714482">
        <id>Q9BWH2</id>
    </interactant>
    <interactant intactId="EBI-7062247">
        <id>Q9UHD4</id>
        <label>CIDEB</label>
    </interactant>
    <organismsDiffer>false</organismsDiffer>
    <experiments>3</experiments>
</comment>
<comment type="interaction">
    <interactant intactId="EBI-714482">
        <id>Q9BWH2</id>
    </interactant>
    <interactant intactId="EBI-2834035">
        <id>Q5RI15</id>
        <label>COX20</label>
    </interactant>
    <organismsDiffer>false</organismsDiffer>
    <experiments>3</experiments>
</comment>
<comment type="interaction">
    <interactant intactId="EBI-714482">
        <id>Q9BWH2</id>
    </interactant>
    <interactant intactId="EBI-17233035">
        <id>Q9BUF7-2</id>
        <label>CRB3</label>
    </interactant>
    <organismsDiffer>false</organismsDiffer>
    <experiments>3</experiments>
</comment>
<comment type="interaction">
    <interactant intactId="EBI-714482">
        <id>Q9BWH2</id>
    </interactant>
    <interactant intactId="EBI-1046040">
        <id>P00387</id>
        <label>CYB5R3</label>
    </interactant>
    <organismsDiffer>false</organismsDiffer>
    <experiments>4</experiments>
</comment>
<comment type="interaction">
    <interactant intactId="EBI-714482">
        <id>Q9BWH2</id>
    </interactant>
    <interactant intactId="EBI-3915253">
        <id>Q15125</id>
        <label>EBP</label>
    </interactant>
    <organismsDiffer>false</organismsDiffer>
    <experiments>3</experiments>
</comment>
<comment type="interaction">
    <interactant intactId="EBI-714482">
        <id>Q9BWH2</id>
    </interactant>
    <interactant intactId="EBI-17640610">
        <id>P34910-2</id>
        <label>EVI2B</label>
    </interactant>
    <organismsDiffer>false</organismsDiffer>
    <experiments>3</experiments>
</comment>
<comment type="interaction">
    <interactant intactId="EBI-714482">
        <id>Q9BWH2</id>
    </interactant>
    <interactant intactId="EBI-12836320">
        <id>Q92915-2</id>
        <label>FGF14</label>
    </interactant>
    <organismsDiffer>false</organismsDiffer>
    <experiments>3</experiments>
</comment>
<comment type="interaction">
    <interactant intactId="EBI-714482">
        <id>Q9BWH2</id>
    </interactant>
    <interactant intactId="EBI-13345167">
        <id>Q8TDT2</id>
        <label>GPR152</label>
    </interactant>
    <organismsDiffer>false</organismsDiffer>
    <experiments>3</experiments>
</comment>
<comment type="interaction">
    <interactant intactId="EBI-714482">
        <id>Q9BWH2</id>
    </interactant>
    <interactant intactId="EBI-12017638">
        <id>P48051</id>
        <label>KCNJ6</label>
    </interactant>
    <organismsDiffer>false</organismsDiffer>
    <experiments>3</experiments>
</comment>
<comment type="interaction">
    <interactant intactId="EBI-714482">
        <id>Q9BWH2</id>
    </interactant>
    <interactant intactId="EBI-8632435">
        <id>P43628</id>
        <label>KIR2DL3</label>
    </interactant>
    <organismsDiffer>false</organismsDiffer>
    <experiments>3</experiments>
</comment>
<comment type="interaction">
    <interactant intactId="EBI-714482">
        <id>Q9BWH2</id>
    </interactant>
    <interactant intactId="EBI-373355">
        <id>Q5SR56</id>
        <label>MFSD14B</label>
    </interactant>
    <organismsDiffer>false</organismsDiffer>
    <experiments>3</experiments>
</comment>
<comment type="interaction">
    <interactant intactId="EBI-714482">
        <id>Q9BWH2</id>
    </interactant>
    <interactant intactId="EBI-724754">
        <id>O14880</id>
        <label>MGST3</label>
    </interactant>
    <organismsDiffer>false</organismsDiffer>
    <experiments>3</experiments>
</comment>
<comment type="interaction">
    <interactant intactId="EBI-714482">
        <id>Q9BWH2</id>
    </interactant>
    <interactant intactId="EBI-7545592">
        <id>Q9H6H4</id>
        <label>REEP4</label>
    </interactant>
    <organismsDiffer>false</organismsDiffer>
    <experiments>3</experiments>
</comment>
<comment type="interaction">
    <interactant intactId="EBI-714482">
        <id>Q9BWH2</id>
    </interactant>
    <interactant intactId="EBI-10192441">
        <id>Q86VR2</id>
        <label>RETREG3</label>
    </interactant>
    <organismsDiffer>false</organismsDiffer>
    <experiments>3</experiments>
</comment>
<comment type="interaction">
    <interactant intactId="EBI-714482">
        <id>Q9BWH2</id>
    </interactant>
    <interactant intactId="EBI-3923480">
        <id>Q8N3Y7</id>
        <label>SDR16C5</label>
    </interactant>
    <organismsDiffer>false</organismsDiffer>
    <experiments>3</experiments>
</comment>
<comment type="interaction">
    <interactant intactId="EBI-714482">
        <id>Q9BWH2</id>
    </interactant>
    <interactant intactId="EBI-18159983">
        <id>Q3KNW5</id>
        <label>SLC10A6</label>
    </interactant>
    <organismsDiffer>false</organismsDiffer>
    <experiments>3</experiments>
</comment>
<comment type="interaction">
    <interactant intactId="EBI-714482">
        <id>Q9BWH2</id>
    </interactant>
    <interactant intactId="EBI-17858931">
        <id>Q8TF71</id>
        <label>SLC16A10</label>
    </interactant>
    <organismsDiffer>false</organismsDiffer>
    <experiments>3</experiments>
</comment>
<comment type="interaction">
    <interactant intactId="EBI-714482">
        <id>Q9BWH2</id>
    </interactant>
    <interactant intactId="EBI-3907610">
        <id>Q8N2U9</id>
        <label>SLC66A2</label>
    </interactant>
    <organismsDiffer>false</organismsDiffer>
    <experiments>3</experiments>
</comment>
<comment type="interaction">
    <interactant intactId="EBI-714482">
        <id>Q9BWH2</id>
    </interactant>
    <interactant intactId="EBI-1211440">
        <id>P27105</id>
        <label>STOM</label>
    </interactant>
    <organismsDiffer>false</organismsDiffer>
    <experiments>3</experiments>
</comment>
<comment type="interaction">
    <interactant intactId="EBI-714482">
        <id>Q9BWH2</id>
    </interactant>
    <interactant intactId="EBI-8032987">
        <id>Q8N9I0</id>
        <label>SYT2</label>
    </interactant>
    <organismsDiffer>false</organismsDiffer>
    <experiments>3</experiments>
</comment>
<comment type="interaction">
    <interactant intactId="EBI-714482">
        <id>Q9BWH2</id>
    </interactant>
    <interactant intactId="EBI-13329239">
        <id>Q6P9G4</id>
        <label>TMEM154</label>
    </interactant>
    <organismsDiffer>false</organismsDiffer>
    <experiments>3</experiments>
</comment>
<comment type="interaction">
    <interactant intactId="EBI-714482">
        <id>Q9BWH2</id>
    </interactant>
    <interactant intactId="EBI-6447886">
        <id>Q9Y320</id>
        <label>TMX2</label>
    </interactant>
    <organismsDiffer>false</organismsDiffer>
    <experiments>3</experiments>
</comment>
<comment type="subcellular location">
    <subcellularLocation>
        <location evidence="4">Mitochondrion outer membrane</location>
        <topology evidence="1">Multi-pass membrane protein</topology>
    </subcellularLocation>
    <subcellularLocation>
        <location evidence="7">Nucleus</location>
    </subcellularLocation>
</comment>
<comment type="tissue specificity">
    <text evidence="5">Highly expressed in platelets (at protein level).</text>
</comment>
<comment type="similarity">
    <text evidence="6">Belongs to the FUN14 family.</text>
</comment>
<comment type="sequence caution" evidence="6">
    <conflict type="frameshift">
        <sequence resource="EMBL-CDS" id="AAG44731"/>
    </conflict>
</comment>
<reference key="1">
    <citation type="journal article" date="2002" name="Zhonghua Shi Yan He Lin Chuang Bing Du Xue Za Zhi">
        <title>Screening and cloning gene of hepatocyte protein interacting with hepatitis C virus core protein.</title>
        <authorList>
            <person name="Li K."/>
            <person name="Wang L."/>
            <person name="Cheng J."/>
            <person name="Zhang L."/>
            <person name="Duan H."/>
            <person name="Lu Y."/>
            <person name="Yang J."/>
            <person name="Liu Y."/>
            <person name="Xia X."/>
            <person name="Wang G."/>
            <person name="Dong J."/>
            <person name="Li L."/>
            <person name="Zhong Y."/>
            <person name="Hong Y."/>
            <person name="Chen J."/>
        </authorList>
    </citation>
    <scope>NUCLEOTIDE SEQUENCE [MRNA]</scope>
</reference>
<reference key="2">
    <citation type="submission" date="2000-05" db="EMBL/GenBank/DDBJ databases">
        <title>A novel gene from human dendritic cells.</title>
        <authorList>
            <person name="Xu X."/>
            <person name="Yang Y."/>
            <person name="Gao G."/>
            <person name="Xiao H."/>
            <person name="Chen Z."/>
            <person name="Han Z."/>
        </authorList>
    </citation>
    <scope>NUCLEOTIDE SEQUENCE [LARGE SCALE MRNA]</scope>
    <source>
        <tissue>Dendritic cell</tissue>
    </source>
</reference>
<reference key="3">
    <citation type="submission" date="2000-07" db="EMBL/GenBank/DDBJ databases">
        <title>Study of 100 skeletal muscle full length mRNA (Telethon project B41).</title>
        <authorList>
            <person name="Frigimelica E."/>
            <person name="Lanfranchi G."/>
        </authorList>
    </citation>
    <scope>NUCLEOTIDE SEQUENCE [LARGE SCALE MRNA]</scope>
    <source>
        <tissue>Skeletal muscle</tissue>
    </source>
</reference>
<reference key="4">
    <citation type="submission" date="2000-11" db="EMBL/GenBank/DDBJ databases">
        <title>Identification of a new oncogene in human cancers.</title>
        <authorList>
            <person name="Kim J.W."/>
        </authorList>
    </citation>
    <scope>NUCLEOTIDE SEQUENCE [LARGE SCALE MRNA]</scope>
</reference>
<reference key="5">
    <citation type="journal article" date="2004" name="Nat. Genet.">
        <title>Complete sequencing and characterization of 21,243 full-length human cDNAs.</title>
        <authorList>
            <person name="Ota T."/>
            <person name="Suzuki Y."/>
            <person name="Nishikawa T."/>
            <person name="Otsuki T."/>
            <person name="Sugiyama T."/>
            <person name="Irie R."/>
            <person name="Wakamatsu A."/>
            <person name="Hayashi K."/>
            <person name="Sato H."/>
            <person name="Nagai K."/>
            <person name="Kimura K."/>
            <person name="Makita H."/>
            <person name="Sekine M."/>
            <person name="Obayashi M."/>
            <person name="Nishi T."/>
            <person name="Shibahara T."/>
            <person name="Tanaka T."/>
            <person name="Ishii S."/>
            <person name="Yamamoto J."/>
            <person name="Saito K."/>
            <person name="Kawai Y."/>
            <person name="Isono Y."/>
            <person name="Nakamura Y."/>
            <person name="Nagahari K."/>
            <person name="Murakami K."/>
            <person name="Yasuda T."/>
            <person name="Iwayanagi T."/>
            <person name="Wagatsuma M."/>
            <person name="Shiratori A."/>
            <person name="Sudo H."/>
            <person name="Hosoiri T."/>
            <person name="Kaku Y."/>
            <person name="Kodaira H."/>
            <person name="Kondo H."/>
            <person name="Sugawara M."/>
            <person name="Takahashi M."/>
            <person name="Kanda K."/>
            <person name="Yokoi T."/>
            <person name="Furuya T."/>
            <person name="Kikkawa E."/>
            <person name="Omura Y."/>
            <person name="Abe K."/>
            <person name="Kamihara K."/>
            <person name="Katsuta N."/>
            <person name="Sato K."/>
            <person name="Tanikawa M."/>
            <person name="Yamazaki M."/>
            <person name="Ninomiya K."/>
            <person name="Ishibashi T."/>
            <person name="Yamashita H."/>
            <person name="Murakawa K."/>
            <person name="Fujimori K."/>
            <person name="Tanai H."/>
            <person name="Kimata M."/>
            <person name="Watanabe M."/>
            <person name="Hiraoka S."/>
            <person name="Chiba Y."/>
            <person name="Ishida S."/>
            <person name="Ono Y."/>
            <person name="Takiguchi S."/>
            <person name="Watanabe S."/>
            <person name="Yosida M."/>
            <person name="Hotuta T."/>
            <person name="Kusano J."/>
            <person name="Kanehori K."/>
            <person name="Takahashi-Fujii A."/>
            <person name="Hara H."/>
            <person name="Tanase T.-O."/>
            <person name="Nomura Y."/>
            <person name="Togiya S."/>
            <person name="Komai F."/>
            <person name="Hara R."/>
            <person name="Takeuchi K."/>
            <person name="Arita M."/>
            <person name="Imose N."/>
            <person name="Musashino K."/>
            <person name="Yuuki H."/>
            <person name="Oshima A."/>
            <person name="Sasaki N."/>
            <person name="Aotsuka S."/>
            <person name="Yoshikawa Y."/>
            <person name="Matsunawa H."/>
            <person name="Ichihara T."/>
            <person name="Shiohata N."/>
            <person name="Sano S."/>
            <person name="Moriya S."/>
            <person name="Momiyama H."/>
            <person name="Satoh N."/>
            <person name="Takami S."/>
            <person name="Terashima Y."/>
            <person name="Suzuki O."/>
            <person name="Nakagawa S."/>
            <person name="Senoh A."/>
            <person name="Mizoguchi H."/>
            <person name="Goto Y."/>
            <person name="Shimizu F."/>
            <person name="Wakebe H."/>
            <person name="Hishigaki H."/>
            <person name="Watanabe T."/>
            <person name="Sugiyama A."/>
            <person name="Takemoto M."/>
            <person name="Kawakami B."/>
            <person name="Yamazaki M."/>
            <person name="Watanabe K."/>
            <person name="Kumagai A."/>
            <person name="Itakura S."/>
            <person name="Fukuzumi Y."/>
            <person name="Fujimori Y."/>
            <person name="Komiyama M."/>
            <person name="Tashiro H."/>
            <person name="Tanigami A."/>
            <person name="Fujiwara T."/>
            <person name="Ono T."/>
            <person name="Yamada K."/>
            <person name="Fujii Y."/>
            <person name="Ozaki K."/>
            <person name="Hirao M."/>
            <person name="Ohmori Y."/>
            <person name="Kawabata A."/>
            <person name="Hikiji T."/>
            <person name="Kobatake N."/>
            <person name="Inagaki H."/>
            <person name="Ikema Y."/>
            <person name="Okamoto S."/>
            <person name="Okitani R."/>
            <person name="Kawakami T."/>
            <person name="Noguchi S."/>
            <person name="Itoh T."/>
            <person name="Shigeta K."/>
            <person name="Senba T."/>
            <person name="Matsumura K."/>
            <person name="Nakajima Y."/>
            <person name="Mizuno T."/>
            <person name="Morinaga M."/>
            <person name="Sasaki M."/>
            <person name="Togashi T."/>
            <person name="Oyama M."/>
            <person name="Hata H."/>
            <person name="Watanabe M."/>
            <person name="Komatsu T."/>
            <person name="Mizushima-Sugano J."/>
            <person name="Satoh T."/>
            <person name="Shirai Y."/>
            <person name="Takahashi Y."/>
            <person name="Nakagawa K."/>
            <person name="Okumura K."/>
            <person name="Nagase T."/>
            <person name="Nomura N."/>
            <person name="Kikuchi H."/>
            <person name="Masuho Y."/>
            <person name="Yamashita R."/>
            <person name="Nakai K."/>
            <person name="Yada T."/>
            <person name="Nakamura Y."/>
            <person name="Ohara O."/>
            <person name="Isogai T."/>
            <person name="Sugano S."/>
        </authorList>
    </citation>
    <scope>NUCLEOTIDE SEQUENCE [LARGE SCALE MRNA]</scope>
    <source>
        <tissue>Brain</tissue>
    </source>
</reference>
<reference key="6">
    <citation type="journal article" date="2005" name="Nature">
        <title>The DNA sequence of the human X chromosome.</title>
        <authorList>
            <person name="Ross M.T."/>
            <person name="Grafham D.V."/>
            <person name="Coffey A.J."/>
            <person name="Scherer S."/>
            <person name="McLay K."/>
            <person name="Muzny D."/>
            <person name="Platzer M."/>
            <person name="Howell G.R."/>
            <person name="Burrows C."/>
            <person name="Bird C.P."/>
            <person name="Frankish A."/>
            <person name="Lovell F.L."/>
            <person name="Howe K.L."/>
            <person name="Ashurst J.L."/>
            <person name="Fulton R.S."/>
            <person name="Sudbrak R."/>
            <person name="Wen G."/>
            <person name="Jones M.C."/>
            <person name="Hurles M.E."/>
            <person name="Andrews T.D."/>
            <person name="Scott C.E."/>
            <person name="Searle S."/>
            <person name="Ramser J."/>
            <person name="Whittaker A."/>
            <person name="Deadman R."/>
            <person name="Carter N.P."/>
            <person name="Hunt S.E."/>
            <person name="Chen R."/>
            <person name="Cree A."/>
            <person name="Gunaratne P."/>
            <person name="Havlak P."/>
            <person name="Hodgson A."/>
            <person name="Metzker M.L."/>
            <person name="Richards S."/>
            <person name="Scott G."/>
            <person name="Steffen D."/>
            <person name="Sodergren E."/>
            <person name="Wheeler D.A."/>
            <person name="Worley K.C."/>
            <person name="Ainscough R."/>
            <person name="Ambrose K.D."/>
            <person name="Ansari-Lari M.A."/>
            <person name="Aradhya S."/>
            <person name="Ashwell R.I."/>
            <person name="Babbage A.K."/>
            <person name="Bagguley C.L."/>
            <person name="Ballabio A."/>
            <person name="Banerjee R."/>
            <person name="Barker G.E."/>
            <person name="Barlow K.F."/>
            <person name="Barrett I.P."/>
            <person name="Bates K.N."/>
            <person name="Beare D.M."/>
            <person name="Beasley H."/>
            <person name="Beasley O."/>
            <person name="Beck A."/>
            <person name="Bethel G."/>
            <person name="Blechschmidt K."/>
            <person name="Brady N."/>
            <person name="Bray-Allen S."/>
            <person name="Bridgeman A.M."/>
            <person name="Brown A.J."/>
            <person name="Brown M.J."/>
            <person name="Bonnin D."/>
            <person name="Bruford E.A."/>
            <person name="Buhay C."/>
            <person name="Burch P."/>
            <person name="Burford D."/>
            <person name="Burgess J."/>
            <person name="Burrill W."/>
            <person name="Burton J."/>
            <person name="Bye J.M."/>
            <person name="Carder C."/>
            <person name="Carrel L."/>
            <person name="Chako J."/>
            <person name="Chapman J.C."/>
            <person name="Chavez D."/>
            <person name="Chen E."/>
            <person name="Chen G."/>
            <person name="Chen Y."/>
            <person name="Chen Z."/>
            <person name="Chinault C."/>
            <person name="Ciccodicola A."/>
            <person name="Clark S.Y."/>
            <person name="Clarke G."/>
            <person name="Clee C.M."/>
            <person name="Clegg S."/>
            <person name="Clerc-Blankenburg K."/>
            <person name="Clifford K."/>
            <person name="Cobley V."/>
            <person name="Cole C.G."/>
            <person name="Conquer J.S."/>
            <person name="Corby N."/>
            <person name="Connor R.E."/>
            <person name="David R."/>
            <person name="Davies J."/>
            <person name="Davis C."/>
            <person name="Davis J."/>
            <person name="Delgado O."/>
            <person name="Deshazo D."/>
            <person name="Dhami P."/>
            <person name="Ding Y."/>
            <person name="Dinh H."/>
            <person name="Dodsworth S."/>
            <person name="Draper H."/>
            <person name="Dugan-Rocha S."/>
            <person name="Dunham A."/>
            <person name="Dunn M."/>
            <person name="Durbin K.J."/>
            <person name="Dutta I."/>
            <person name="Eades T."/>
            <person name="Ellwood M."/>
            <person name="Emery-Cohen A."/>
            <person name="Errington H."/>
            <person name="Evans K.L."/>
            <person name="Faulkner L."/>
            <person name="Francis F."/>
            <person name="Frankland J."/>
            <person name="Fraser A.E."/>
            <person name="Galgoczy P."/>
            <person name="Gilbert J."/>
            <person name="Gill R."/>
            <person name="Gloeckner G."/>
            <person name="Gregory S.G."/>
            <person name="Gribble S."/>
            <person name="Griffiths C."/>
            <person name="Grocock R."/>
            <person name="Gu Y."/>
            <person name="Gwilliam R."/>
            <person name="Hamilton C."/>
            <person name="Hart E.A."/>
            <person name="Hawes A."/>
            <person name="Heath P.D."/>
            <person name="Heitmann K."/>
            <person name="Hennig S."/>
            <person name="Hernandez J."/>
            <person name="Hinzmann B."/>
            <person name="Ho S."/>
            <person name="Hoffs M."/>
            <person name="Howden P.J."/>
            <person name="Huckle E.J."/>
            <person name="Hume J."/>
            <person name="Hunt P.J."/>
            <person name="Hunt A.R."/>
            <person name="Isherwood J."/>
            <person name="Jacob L."/>
            <person name="Johnson D."/>
            <person name="Jones S."/>
            <person name="de Jong P.J."/>
            <person name="Joseph S.S."/>
            <person name="Keenan S."/>
            <person name="Kelly S."/>
            <person name="Kershaw J.K."/>
            <person name="Khan Z."/>
            <person name="Kioschis P."/>
            <person name="Klages S."/>
            <person name="Knights A.J."/>
            <person name="Kosiura A."/>
            <person name="Kovar-Smith C."/>
            <person name="Laird G.K."/>
            <person name="Langford C."/>
            <person name="Lawlor S."/>
            <person name="Leversha M."/>
            <person name="Lewis L."/>
            <person name="Liu W."/>
            <person name="Lloyd C."/>
            <person name="Lloyd D.M."/>
            <person name="Loulseged H."/>
            <person name="Loveland J.E."/>
            <person name="Lovell J.D."/>
            <person name="Lozado R."/>
            <person name="Lu J."/>
            <person name="Lyne R."/>
            <person name="Ma J."/>
            <person name="Maheshwari M."/>
            <person name="Matthews L.H."/>
            <person name="McDowall J."/>
            <person name="McLaren S."/>
            <person name="McMurray A."/>
            <person name="Meidl P."/>
            <person name="Meitinger T."/>
            <person name="Milne S."/>
            <person name="Miner G."/>
            <person name="Mistry S.L."/>
            <person name="Morgan M."/>
            <person name="Morris S."/>
            <person name="Mueller I."/>
            <person name="Mullikin J.C."/>
            <person name="Nguyen N."/>
            <person name="Nordsiek G."/>
            <person name="Nyakatura G."/>
            <person name="O'dell C.N."/>
            <person name="Okwuonu G."/>
            <person name="Palmer S."/>
            <person name="Pandian R."/>
            <person name="Parker D."/>
            <person name="Parrish J."/>
            <person name="Pasternak S."/>
            <person name="Patel D."/>
            <person name="Pearce A.V."/>
            <person name="Pearson D.M."/>
            <person name="Pelan S.E."/>
            <person name="Perez L."/>
            <person name="Porter K.M."/>
            <person name="Ramsey Y."/>
            <person name="Reichwald K."/>
            <person name="Rhodes S."/>
            <person name="Ridler K.A."/>
            <person name="Schlessinger D."/>
            <person name="Schueler M.G."/>
            <person name="Sehra H.K."/>
            <person name="Shaw-Smith C."/>
            <person name="Shen H."/>
            <person name="Sheridan E.M."/>
            <person name="Shownkeen R."/>
            <person name="Skuce C.D."/>
            <person name="Smith M.L."/>
            <person name="Sotheran E.C."/>
            <person name="Steingruber H.E."/>
            <person name="Steward C.A."/>
            <person name="Storey R."/>
            <person name="Swann R.M."/>
            <person name="Swarbreck D."/>
            <person name="Tabor P.E."/>
            <person name="Taudien S."/>
            <person name="Taylor T."/>
            <person name="Teague B."/>
            <person name="Thomas K."/>
            <person name="Thorpe A."/>
            <person name="Timms K."/>
            <person name="Tracey A."/>
            <person name="Trevanion S."/>
            <person name="Tromans A.C."/>
            <person name="d'Urso M."/>
            <person name="Verduzco D."/>
            <person name="Villasana D."/>
            <person name="Waldron L."/>
            <person name="Wall M."/>
            <person name="Wang Q."/>
            <person name="Warren J."/>
            <person name="Warry G.L."/>
            <person name="Wei X."/>
            <person name="West A."/>
            <person name="Whitehead S.L."/>
            <person name="Whiteley M.N."/>
            <person name="Wilkinson J.E."/>
            <person name="Willey D.L."/>
            <person name="Williams G."/>
            <person name="Williams L."/>
            <person name="Williamson A."/>
            <person name="Williamson H."/>
            <person name="Wilming L."/>
            <person name="Woodmansey R.L."/>
            <person name="Wray P.W."/>
            <person name="Yen J."/>
            <person name="Zhang J."/>
            <person name="Zhou J."/>
            <person name="Zoghbi H."/>
            <person name="Zorilla S."/>
            <person name="Buck D."/>
            <person name="Reinhardt R."/>
            <person name="Poustka A."/>
            <person name="Rosenthal A."/>
            <person name="Lehrach H."/>
            <person name="Meindl A."/>
            <person name="Minx P.J."/>
            <person name="Hillier L.W."/>
            <person name="Willard H.F."/>
            <person name="Wilson R.K."/>
            <person name="Waterston R.H."/>
            <person name="Rice C.M."/>
            <person name="Vaudin M."/>
            <person name="Coulson A."/>
            <person name="Nelson D.L."/>
            <person name="Weinstock G."/>
            <person name="Sulston J.E."/>
            <person name="Durbin R.M."/>
            <person name="Hubbard T."/>
            <person name="Gibbs R.A."/>
            <person name="Beck S."/>
            <person name="Rogers J."/>
            <person name="Bentley D.R."/>
        </authorList>
    </citation>
    <scope>NUCLEOTIDE SEQUENCE [LARGE SCALE GENOMIC DNA]</scope>
</reference>
<reference key="7">
    <citation type="submission" date="2005-09" db="EMBL/GenBank/DDBJ databases">
        <authorList>
            <person name="Mural R.J."/>
            <person name="Istrail S."/>
            <person name="Sutton G.G."/>
            <person name="Florea L."/>
            <person name="Halpern A.L."/>
            <person name="Mobarry C.M."/>
            <person name="Lippert R."/>
            <person name="Walenz B."/>
            <person name="Shatkay H."/>
            <person name="Dew I."/>
            <person name="Miller J.R."/>
            <person name="Flanigan M.J."/>
            <person name="Edwards N.J."/>
            <person name="Bolanos R."/>
            <person name="Fasulo D."/>
            <person name="Halldorsson B.V."/>
            <person name="Hannenhalli S."/>
            <person name="Turner R."/>
            <person name="Yooseph S."/>
            <person name="Lu F."/>
            <person name="Nusskern D.R."/>
            <person name="Shue B.C."/>
            <person name="Zheng X.H."/>
            <person name="Zhong F."/>
            <person name="Delcher A.L."/>
            <person name="Huson D.H."/>
            <person name="Kravitz S.A."/>
            <person name="Mouchard L."/>
            <person name="Reinert K."/>
            <person name="Remington K.A."/>
            <person name="Clark A.G."/>
            <person name="Waterman M.S."/>
            <person name="Eichler E.E."/>
            <person name="Adams M.D."/>
            <person name="Hunkapiller M.W."/>
            <person name="Myers E.W."/>
            <person name="Venter J.C."/>
        </authorList>
    </citation>
    <scope>NUCLEOTIDE SEQUENCE [LARGE SCALE GENOMIC DNA]</scope>
</reference>
<reference key="8">
    <citation type="journal article" date="2004" name="Genome Res.">
        <title>The status, quality, and expansion of the NIH full-length cDNA project: the Mammalian Gene Collection (MGC).</title>
        <authorList>
            <consortium name="The MGC Project Team"/>
        </authorList>
    </citation>
    <scope>NUCLEOTIDE SEQUENCE [LARGE SCALE MRNA]</scope>
    <source>
        <tissue>Brain</tissue>
        <tissue>Eye</tissue>
        <tissue>Uterus</tissue>
    </source>
</reference>
<reference key="9">
    <citation type="journal article" date="2009" name="Sci. Signal.">
        <title>Quantitative phosphoproteomic analysis of T cell receptor signaling reveals system-wide modulation of protein-protein interactions.</title>
        <authorList>
            <person name="Mayya V."/>
            <person name="Lundgren D.H."/>
            <person name="Hwang S.-I."/>
            <person name="Rezaul K."/>
            <person name="Wu L."/>
            <person name="Eng J.K."/>
            <person name="Rodionov V."/>
            <person name="Han D.K."/>
        </authorList>
    </citation>
    <scope>PHOSPHORYLATION [LARGE SCALE ANALYSIS] AT SER-151</scope>
    <scope>IDENTIFICATION BY MASS SPECTROMETRY [LARGE SCALE ANALYSIS]</scope>
    <source>
        <tissue>Leukemic T-cell</tissue>
    </source>
</reference>
<reference key="10">
    <citation type="journal article" date="2011" name="Sci. Signal.">
        <title>System-wide temporal characterization of the proteome and phosphoproteome of human embryonic stem cell differentiation.</title>
        <authorList>
            <person name="Rigbolt K.T."/>
            <person name="Prokhorova T.A."/>
            <person name="Akimov V."/>
            <person name="Henningsen J."/>
            <person name="Johansen P.T."/>
            <person name="Kratchmarova I."/>
            <person name="Kassem M."/>
            <person name="Mann M."/>
            <person name="Olsen J.V."/>
            <person name="Blagoev B."/>
        </authorList>
    </citation>
    <scope>PHOSPHORYLATION [LARGE SCALE ANALYSIS] AT SER-151</scope>
    <scope>IDENTIFICATION BY MASS SPECTROMETRY [LARGE SCALE ANALYSIS]</scope>
</reference>
<reference key="11">
    <citation type="journal article" date="2013" name="J. Proteome Res.">
        <title>Toward a comprehensive characterization of a human cancer cell phosphoproteome.</title>
        <authorList>
            <person name="Zhou H."/>
            <person name="Di Palma S."/>
            <person name="Preisinger C."/>
            <person name="Peng M."/>
            <person name="Polat A.N."/>
            <person name="Heck A.J."/>
            <person name="Mohammed S."/>
        </authorList>
    </citation>
    <scope>PHOSPHORYLATION [LARGE SCALE ANALYSIS] AT SER-10 AND SER-151</scope>
    <scope>IDENTIFICATION BY MASS SPECTROMETRY [LARGE SCALE ANALYSIS]</scope>
    <source>
        <tissue>Cervix carcinoma</tissue>
        <tissue>Erythroleukemia</tissue>
    </source>
</reference>
<reference key="12">
    <citation type="journal article" date="2014" name="J. Proteomics">
        <title>An enzyme assisted RP-RPLC approach for in-depth analysis of human liver phosphoproteome.</title>
        <authorList>
            <person name="Bian Y."/>
            <person name="Song C."/>
            <person name="Cheng K."/>
            <person name="Dong M."/>
            <person name="Wang F."/>
            <person name="Huang J."/>
            <person name="Sun D."/>
            <person name="Wang L."/>
            <person name="Ye M."/>
            <person name="Zou H."/>
        </authorList>
    </citation>
    <scope>PHOSPHORYLATION [LARGE SCALE ANALYSIS] AT SER-53 AND SER-151</scope>
    <scope>IDENTIFICATION BY MASS SPECTROMETRY [LARGE SCALE ANALYSIS]</scope>
    <source>
        <tissue>Liver</tissue>
    </source>
</reference>
<reference key="13">
    <citation type="journal article" date="2015" name="J. Cell. Biochem.">
        <title>HCBP6 Modulates Triglyceride Homeostasis in Hepatocytes Via the SREBP1c/FASN Pathway.</title>
        <authorList>
            <person name="Gao L.L."/>
            <person name="Li M."/>
            <person name="Wang Q."/>
            <person name="Liu S.A."/>
            <person name="Zhang J.Q."/>
            <person name="Cheng J."/>
        </authorList>
    </citation>
    <scope>FUNCTION</scope>
</reference>
<reference key="14">
    <citation type="journal article" date="2018" name="BMB Rep.">
        <title>HCBP6 upregulates human SREBP1c expression by binding to C/EBPbeta-binding site in the SREBP1c promoter.</title>
        <authorList>
            <person name="Yang X."/>
            <person name="Han M."/>
            <person name="Liu S."/>
            <person name="Yuan X."/>
            <person name="Liu X."/>
            <person name="Feng S."/>
            <person name="Zhou L."/>
            <person name="Li Y."/>
            <person name="Lu H."/>
            <person name="Cheng J."/>
            <person name="Lin S."/>
        </authorList>
    </citation>
    <scope>FUNCTION</scope>
    <scope>SUBCELLULAR LOCATION</scope>
</reference>
<reference key="15">
    <citation type="journal article" date="2019" name="Cardiovasc. Res.">
        <title>FUNDC2 regulates platelet activation through AKT/GSK-3beta/cGMP axis.</title>
        <authorList>
            <person name="Ma Q."/>
            <person name="Zhang W."/>
            <person name="Zhu C."/>
            <person name="Liu J."/>
            <person name="Chen Q."/>
        </authorList>
    </citation>
    <scope>TISSUE SPECIFICITY</scope>
</reference>
<reference key="16">
    <citation type="journal article" date="2019" name="Cell Death Differ.">
        <title>Mitochondrial PIP3-binding protein FUNDC2 supports platelet survival via AKT signaling pathway.</title>
        <authorList>
            <person name="Ma Q."/>
            <person name="Zhu C."/>
            <person name="Zhang W."/>
            <person name="Ta N."/>
            <person name="Zhang R."/>
            <person name="Liu L."/>
            <person name="Feng D."/>
            <person name="Cheng H."/>
            <person name="Liu J."/>
            <person name="Chen Q."/>
        </authorList>
    </citation>
    <scope>SUBCELLULAR LOCATION</scope>
    <scope>TOPOLOGY</scope>
    <scope>FUNCTION</scope>
</reference>
<evidence type="ECO:0000255" key="1"/>
<evidence type="ECO:0000269" key="2">
    <source>
    </source>
</evidence>
<evidence type="ECO:0000269" key="3">
    <source>
    </source>
</evidence>
<evidence type="ECO:0000269" key="4">
    <source>
    </source>
</evidence>
<evidence type="ECO:0000269" key="5">
    <source>
    </source>
</evidence>
<evidence type="ECO:0000305" key="6"/>
<evidence type="ECO:0000305" key="7">
    <source>
    </source>
</evidence>
<evidence type="ECO:0000305" key="8">
    <source>
    </source>
</evidence>
<evidence type="ECO:0000312" key="9">
    <source>
        <dbReference type="HGNC" id="HGNC:24925"/>
    </source>
</evidence>
<evidence type="ECO:0007744" key="10">
    <source>
    </source>
</evidence>
<evidence type="ECO:0007744" key="11">
    <source>
    </source>
</evidence>
<evidence type="ECO:0007744" key="12">
    <source>
    </source>
</evidence>
<evidence type="ECO:0007744" key="13">
    <source>
    </source>
</evidence>
<dbReference type="EMBL" id="AY032594">
    <property type="protein sequence ID" value="AAK51136.1"/>
    <property type="molecule type" value="mRNA"/>
</dbReference>
<dbReference type="EMBL" id="AF267862">
    <property type="protein sequence ID" value="AAG44731.1"/>
    <property type="status" value="ALT_FRAME"/>
    <property type="molecule type" value="mRNA"/>
</dbReference>
<dbReference type="EMBL" id="AJ272054">
    <property type="protein sequence ID" value="CAC81242.1"/>
    <property type="molecule type" value="mRNA"/>
</dbReference>
<dbReference type="EMBL" id="AF320778">
    <property type="protein sequence ID" value="AAN51931.1"/>
    <property type="molecule type" value="mRNA"/>
</dbReference>
<dbReference type="EMBL" id="AK313143">
    <property type="protein sequence ID" value="BAG35962.1"/>
    <property type="molecule type" value="mRNA"/>
</dbReference>
<dbReference type="EMBL" id="BX470111">
    <property type="status" value="NOT_ANNOTATED_CDS"/>
    <property type="molecule type" value="Genomic_DNA"/>
</dbReference>
<dbReference type="EMBL" id="CH471172">
    <property type="protein sequence ID" value="EAW72643.1"/>
    <property type="molecule type" value="Genomic_DNA"/>
</dbReference>
<dbReference type="EMBL" id="CH471172">
    <property type="protein sequence ID" value="EAW72644.1"/>
    <property type="molecule type" value="Genomic_DNA"/>
</dbReference>
<dbReference type="EMBL" id="BC000255">
    <property type="protein sequence ID" value="AAH00255.2"/>
    <property type="molecule type" value="mRNA"/>
</dbReference>
<dbReference type="EMBL" id="BC072685">
    <property type="protein sequence ID" value="AAH72685.1"/>
    <property type="molecule type" value="mRNA"/>
</dbReference>
<dbReference type="EMBL" id="BC108657">
    <property type="protein sequence ID" value="AAI08658.1"/>
    <property type="molecule type" value="mRNA"/>
</dbReference>
<dbReference type="CCDS" id="CCDS14763.1"/>
<dbReference type="RefSeq" id="NP_076423.2">
    <property type="nucleotide sequence ID" value="NM_023934.3"/>
</dbReference>
<dbReference type="BioGRID" id="122440">
    <property type="interactions" value="109"/>
</dbReference>
<dbReference type="FunCoup" id="Q9BWH2">
    <property type="interactions" value="1874"/>
</dbReference>
<dbReference type="IntAct" id="Q9BWH2">
    <property type="interactions" value="90"/>
</dbReference>
<dbReference type="MINT" id="Q9BWH2"/>
<dbReference type="STRING" id="9606.ENSP00000358510"/>
<dbReference type="GlyGen" id="Q9BWH2">
    <property type="glycosylation" value="1 site, 1 O-linked glycan (1 site)"/>
</dbReference>
<dbReference type="iPTMnet" id="Q9BWH2"/>
<dbReference type="PhosphoSitePlus" id="Q9BWH2"/>
<dbReference type="SwissPalm" id="Q9BWH2"/>
<dbReference type="BioMuta" id="FUNDC2"/>
<dbReference type="DMDM" id="74752400"/>
<dbReference type="jPOST" id="Q9BWH2"/>
<dbReference type="MassIVE" id="Q9BWH2"/>
<dbReference type="PaxDb" id="9606-ENSP00000358510"/>
<dbReference type="PeptideAtlas" id="Q9BWH2"/>
<dbReference type="ProteomicsDB" id="79278"/>
<dbReference type="Pumba" id="Q9BWH2"/>
<dbReference type="Antibodypedia" id="31390">
    <property type="antibodies" value="91 antibodies from 16 providers"/>
</dbReference>
<dbReference type="DNASU" id="65991"/>
<dbReference type="Ensembl" id="ENST00000369498.8">
    <property type="protein sequence ID" value="ENSP00000358510.3"/>
    <property type="gene ID" value="ENSG00000165775.18"/>
</dbReference>
<dbReference type="GeneID" id="65991"/>
<dbReference type="KEGG" id="hsa:65991"/>
<dbReference type="MANE-Select" id="ENST00000369498.8">
    <property type="protein sequence ID" value="ENSP00000358510.3"/>
    <property type="RefSeq nucleotide sequence ID" value="NM_023934.4"/>
    <property type="RefSeq protein sequence ID" value="NP_076423.2"/>
</dbReference>
<dbReference type="UCSC" id="uc004fmw.4">
    <property type="organism name" value="human"/>
</dbReference>
<dbReference type="AGR" id="HGNC:24925"/>
<dbReference type="CTD" id="65991"/>
<dbReference type="DisGeNET" id="65991"/>
<dbReference type="GeneCards" id="FUNDC2"/>
<dbReference type="HGNC" id="HGNC:24925">
    <property type="gene designation" value="FUNDC2"/>
</dbReference>
<dbReference type="HPA" id="ENSG00000165775">
    <property type="expression patterns" value="Tissue enhanced (tongue)"/>
</dbReference>
<dbReference type="MalaCards" id="FUNDC2"/>
<dbReference type="MIM" id="301042">
    <property type="type" value="gene"/>
</dbReference>
<dbReference type="neXtProt" id="NX_Q9BWH2"/>
<dbReference type="OpenTargets" id="ENSG00000165775"/>
<dbReference type="PharmGKB" id="PA134908797"/>
<dbReference type="VEuPathDB" id="HostDB:ENSG00000165775"/>
<dbReference type="eggNOG" id="KOG4099">
    <property type="taxonomic scope" value="Eukaryota"/>
</dbReference>
<dbReference type="GeneTree" id="ENSGT00940000154783"/>
<dbReference type="HOGENOM" id="CLU_095425_2_0_1"/>
<dbReference type="InParanoid" id="Q9BWH2"/>
<dbReference type="OMA" id="AAPSFKM"/>
<dbReference type="OrthoDB" id="163794at2759"/>
<dbReference type="PAN-GO" id="Q9BWH2">
    <property type="GO annotations" value="2 GO annotations based on evolutionary models"/>
</dbReference>
<dbReference type="PhylomeDB" id="Q9BWH2"/>
<dbReference type="TreeFam" id="TF300280"/>
<dbReference type="PathwayCommons" id="Q9BWH2"/>
<dbReference type="SignaLink" id="Q9BWH2"/>
<dbReference type="BioGRID-ORCS" id="65991">
    <property type="hits" value="15 hits in 780 CRISPR screens"/>
</dbReference>
<dbReference type="ChiTaRS" id="FUNDC2">
    <property type="organism name" value="human"/>
</dbReference>
<dbReference type="GeneWiki" id="FUNDC2"/>
<dbReference type="GenomeRNAi" id="65991"/>
<dbReference type="Pharos" id="Q9BWH2">
    <property type="development level" value="Tbio"/>
</dbReference>
<dbReference type="PRO" id="PR:Q9BWH2"/>
<dbReference type="Proteomes" id="UP000005640">
    <property type="component" value="Chromosome X"/>
</dbReference>
<dbReference type="RNAct" id="Q9BWH2">
    <property type="molecule type" value="protein"/>
</dbReference>
<dbReference type="Bgee" id="ENSG00000165775">
    <property type="expression patterns" value="Expressed in apex of heart and 127 other cell types or tissues"/>
</dbReference>
<dbReference type="ExpressionAtlas" id="Q9BWH2">
    <property type="expression patterns" value="baseline and differential"/>
</dbReference>
<dbReference type="GO" id="GO:0005741">
    <property type="term" value="C:mitochondrial outer membrane"/>
    <property type="evidence" value="ECO:0000318"/>
    <property type="project" value="GO_Central"/>
</dbReference>
<dbReference type="GO" id="GO:0005739">
    <property type="term" value="C:mitochondrion"/>
    <property type="evidence" value="ECO:0000314"/>
    <property type="project" value="LIFEdb"/>
</dbReference>
<dbReference type="GO" id="GO:0005634">
    <property type="term" value="C:nucleus"/>
    <property type="evidence" value="ECO:0007005"/>
    <property type="project" value="UniProtKB"/>
</dbReference>
<dbReference type="GO" id="GO:0005547">
    <property type="term" value="F:phosphatidylinositol-3,4,5-trisphosphate binding"/>
    <property type="evidence" value="ECO:0000314"/>
    <property type="project" value="UniProtKB"/>
</dbReference>
<dbReference type="GO" id="GO:0000422">
    <property type="term" value="P:autophagy of mitochondrion"/>
    <property type="evidence" value="ECO:0000318"/>
    <property type="project" value="GO_Central"/>
</dbReference>
<dbReference type="GO" id="GO:0035356">
    <property type="term" value="P:intracellular triglyceride homeostasis"/>
    <property type="evidence" value="ECO:0000315"/>
    <property type="project" value="UniProtKB"/>
</dbReference>
<dbReference type="GO" id="GO:0010543">
    <property type="term" value="P:regulation of platelet activation"/>
    <property type="evidence" value="ECO:0000250"/>
    <property type="project" value="UniProtKB"/>
</dbReference>
<dbReference type="InterPro" id="IPR007014">
    <property type="entry name" value="FUN14"/>
</dbReference>
<dbReference type="PANTHER" id="PTHR21346">
    <property type="entry name" value="FUN14 DOMAIN CONTAINING"/>
    <property type="match status" value="1"/>
</dbReference>
<dbReference type="PANTHER" id="PTHR21346:SF5">
    <property type="entry name" value="FUN14 DOMAIN-CONTAINING PROTEIN 2"/>
    <property type="match status" value="1"/>
</dbReference>
<dbReference type="Pfam" id="PF04930">
    <property type="entry name" value="FUN14"/>
    <property type="match status" value="1"/>
</dbReference>
<keyword id="KW-0472">Membrane</keyword>
<keyword id="KW-0496">Mitochondrion</keyword>
<keyword id="KW-1000">Mitochondrion outer membrane</keyword>
<keyword id="KW-0539">Nucleus</keyword>
<keyword id="KW-0597">Phosphoprotein</keyword>
<keyword id="KW-1267">Proteomics identification</keyword>
<keyword id="KW-1185">Reference proteome</keyword>
<keyword id="KW-0804">Transcription</keyword>
<keyword id="KW-0805">Transcription regulation</keyword>
<keyword id="KW-0812">Transmembrane</keyword>
<keyword id="KW-1133">Transmembrane helix</keyword>
<sequence>METSAPRAGSQVVATTARHSAAYRADPLRVSSRDKLTEMAASSQGNFEGNFESLDLAEFAKKQPWWRKLFGQESGPSAEKYSVATQLFIGGVTGWCTGFIFQKVGKLAATAVGGGFFLLQLANHTGYIKVDWQRVEKDMKKAKEQLKIRKSNQIPTEVRSKAEEVVSFVKKNVLVTGGFFGGFLLGMAS</sequence>
<accession>Q9BWH2</accession>
<accession>B2R7W5</accession>
<accession>D3DWY5</accession>
<accession>Q8NHX8</accession>
<accession>Q9H2I6</accession>